<proteinExistence type="evidence at protein level"/>
<name>MANEA_HUMAN</name>
<accession>Q5SRI9</accession>
<accession>A6H8M6</accession>
<accession>Q5SRJ0</accession>
<accession>Q6MZV0</accession>
<accession>Q70JE9</accession>
<accession>Q7Z3V7</accession>
<accession>Q8WWX5</accession>
<accession>Q9H9D2</accession>
<protein>
    <recommendedName>
        <fullName>Glycoprotein endo-alpha-1,2-mannosidase</fullName>
        <shortName>Endo-alpha mannosidase</shortName>
        <shortName>Endomannosidase</shortName>
        <shortName>hEndo</shortName>
        <ecNumber evidence="2 3">3.2.1.130</ecNumber>
    </recommendedName>
    <alternativeName>
        <fullName>Mandaselin</fullName>
    </alternativeName>
</protein>
<evidence type="ECO:0000255" key="1"/>
<evidence type="ECO:0000269" key="2">
    <source>
    </source>
</evidence>
<evidence type="ECO:0000269" key="3">
    <source>
    </source>
</evidence>
<evidence type="ECO:0000269" key="4">
    <source>
    </source>
</evidence>
<evidence type="ECO:0000305" key="5"/>
<evidence type="ECO:0007829" key="6">
    <source>
        <dbReference type="PDB" id="6ZDC"/>
    </source>
</evidence>
<evidence type="ECO:0007829" key="7">
    <source>
        <dbReference type="PDB" id="6ZDF"/>
    </source>
</evidence>
<organism>
    <name type="scientific">Homo sapiens</name>
    <name type="common">Human</name>
    <dbReference type="NCBI Taxonomy" id="9606"/>
    <lineage>
        <taxon>Eukaryota</taxon>
        <taxon>Metazoa</taxon>
        <taxon>Chordata</taxon>
        <taxon>Craniata</taxon>
        <taxon>Vertebrata</taxon>
        <taxon>Euteleostomi</taxon>
        <taxon>Mammalia</taxon>
        <taxon>Eutheria</taxon>
        <taxon>Euarchontoglires</taxon>
        <taxon>Primates</taxon>
        <taxon>Haplorrhini</taxon>
        <taxon>Catarrhini</taxon>
        <taxon>Hominidae</taxon>
        <taxon>Homo</taxon>
    </lineage>
</organism>
<feature type="chain" id="PRO_0000282315" description="Glycoprotein endo-alpha-1,2-mannosidase">
    <location>
        <begin position="1"/>
        <end position="462"/>
    </location>
</feature>
<feature type="topological domain" description="Cytoplasmic" evidence="1">
    <location>
        <begin position="1"/>
        <end position="8"/>
    </location>
</feature>
<feature type="transmembrane region" description="Helical; Signal-anchor for type II membrane protein" evidence="1">
    <location>
        <begin position="9"/>
        <end position="29"/>
    </location>
</feature>
<feature type="topological domain" description="Lumenal" evidence="1">
    <location>
        <begin position="30"/>
        <end position="462"/>
    </location>
</feature>
<feature type="region of interest" description="Catalytic" evidence="5">
    <location>
        <begin position="60"/>
        <end position="462"/>
    </location>
</feature>
<feature type="sequence variant" id="VAR_036242" description="In a breast cancer sample; somatic mutation; dbSNP:rs780723017." evidence="4">
    <original>Y</original>
    <variation>C</variation>
    <location>
        <position position="331"/>
    </location>
</feature>
<feature type="sequence conflict" description="In Ref. 4; CAD97640." evidence="5" ref="4">
    <original>E</original>
    <variation>G</variation>
    <location>
        <position position="129"/>
    </location>
</feature>
<feature type="sequence conflict" description="In Ref. 1; CAE12165." evidence="5" ref="1">
    <original>N</original>
    <variation>S</variation>
    <location>
        <position position="237"/>
    </location>
</feature>
<feature type="sequence conflict" description="In Ref. 2; AAQ75077, 3; BAB14298 and 4; CAE45927." evidence="5" ref="2 3 4">
    <original>F</original>
    <variation>I</variation>
    <location>
        <position position="344"/>
    </location>
</feature>
<feature type="strand" evidence="6">
    <location>
        <begin position="100"/>
        <end position="107"/>
    </location>
</feature>
<feature type="helix" evidence="6">
    <location>
        <begin position="114"/>
        <end position="117"/>
    </location>
</feature>
<feature type="strand" evidence="6">
    <location>
        <begin position="121"/>
        <end position="124"/>
    </location>
</feature>
<feature type="helix" evidence="7">
    <location>
        <begin position="133"/>
        <end position="136"/>
    </location>
</feature>
<feature type="turn" evidence="6">
    <location>
        <begin position="146"/>
        <end position="148"/>
    </location>
</feature>
<feature type="strand" evidence="6">
    <location>
        <begin position="151"/>
        <end position="154"/>
    </location>
</feature>
<feature type="helix" evidence="6">
    <location>
        <begin position="166"/>
        <end position="178"/>
    </location>
</feature>
<feature type="strand" evidence="6">
    <location>
        <begin position="181"/>
        <end position="188"/>
    </location>
</feature>
<feature type="strand" evidence="6">
    <location>
        <begin position="197"/>
        <end position="199"/>
    </location>
</feature>
<feature type="helix" evidence="6">
    <location>
        <begin position="201"/>
        <end position="204"/>
    </location>
</feature>
<feature type="helix" evidence="6">
    <location>
        <begin position="205"/>
        <end position="214"/>
    </location>
</feature>
<feature type="strand" evidence="6">
    <location>
        <begin position="218"/>
        <end position="223"/>
    </location>
</feature>
<feature type="helix" evidence="6">
    <location>
        <begin position="231"/>
        <end position="245"/>
    </location>
</feature>
<feature type="strand" evidence="7">
    <location>
        <begin position="253"/>
        <end position="255"/>
    </location>
</feature>
<feature type="strand" evidence="6">
    <location>
        <begin position="257"/>
        <end position="259"/>
    </location>
</feature>
<feature type="strand" evidence="6">
    <location>
        <begin position="264"/>
        <end position="267"/>
    </location>
</feature>
<feature type="helix" evidence="6">
    <location>
        <begin position="270"/>
        <end position="272"/>
    </location>
</feature>
<feature type="helix" evidence="6">
    <location>
        <begin position="275"/>
        <end position="282"/>
    </location>
</feature>
<feature type="strand" evidence="6">
    <location>
        <begin position="298"/>
        <end position="302"/>
    </location>
</feature>
<feature type="helix" evidence="6">
    <location>
        <begin position="308"/>
        <end position="315"/>
    </location>
</feature>
<feature type="strand" evidence="6">
    <location>
        <begin position="318"/>
        <end position="321"/>
    </location>
</feature>
<feature type="strand" evidence="6">
    <location>
        <begin position="329"/>
        <end position="331"/>
    </location>
</feature>
<feature type="helix" evidence="6">
    <location>
        <begin position="335"/>
        <end position="337"/>
    </location>
</feature>
<feature type="helix" evidence="6">
    <location>
        <begin position="338"/>
        <end position="347"/>
    </location>
</feature>
<feature type="strand" evidence="6">
    <location>
        <begin position="351"/>
        <end position="353"/>
    </location>
</feature>
<feature type="turn" evidence="6">
    <location>
        <begin position="363"/>
        <end position="365"/>
    </location>
</feature>
<feature type="helix" evidence="6">
    <location>
        <begin position="370"/>
        <end position="372"/>
    </location>
</feature>
<feature type="helix" evidence="6">
    <location>
        <begin position="377"/>
        <end position="379"/>
    </location>
</feature>
<feature type="helix" evidence="6">
    <location>
        <begin position="380"/>
        <end position="390"/>
    </location>
</feature>
<feature type="strand" evidence="6">
    <location>
        <begin position="397"/>
        <end position="400"/>
    </location>
</feature>
<feature type="turn" evidence="6">
    <location>
        <begin position="405"/>
        <end position="408"/>
    </location>
</feature>
<feature type="helix" evidence="6">
    <location>
        <begin position="434"/>
        <end position="450"/>
    </location>
</feature>
<feature type="turn" evidence="7">
    <location>
        <begin position="451"/>
        <end position="453"/>
    </location>
</feature>
<sequence length="462" mass="53671">MAKFRRRTCIILALFILFIFSLMMGLKMLRPNTATFGAPFGLDLLPELHQRTIHLGKNFDFQKSDRINSETNTKNLKSVEITMKPSKASELNLDELPPLNNYLHVFYYSWYGNPQFDGKYIHWNHPVLEHWDPRIAKNYPQGRHNPPDDIGSSFYPELGSYSSRDPSVIETHMRQMRSASIGVLALSWYPPDVNDENGEPTDNLVPTILDKAHKYNLKVTFHIEPYSNRDDQNMYKNVKYIIDKYGNHPAFYRYKTKTGNALPMFYVYDSYITKPEKWANLLTTSGSRSIRNSPYDGLFIALLVEEKHKYDILQSGFDGIYTYFATNGFTYGSSHQNWASLKLFCDKYNLIFIPSVGPGYIDTSIRPWNTQNTRNRINGKYYEIGLSAALQTRPSLISITSFNEWHEGTQIEKAVPKRTSNTVYLDYRPHKPGLYLELTRKWSEKYSKERATYALDRQLPVS</sequence>
<comment type="catalytic activity">
    <reaction evidence="2 3">
        <text>N-{alpha-Glc-(1-&gt;3)-alpha-Man-(1-&gt;2)-alpha-Man-(1-&gt;2)-alpha-Man-(1-&gt;3)-[alpha-Man-(1-&gt;2)-alpha-Man-(1-&gt;3)-[alpha-Man-(1-&gt;2)-alpha-Man-(1-&gt;6)]-alpha-Man-(1-&gt;6)]-beta-Man-(1-&gt;4)-beta-GlcNAc-(1-&gt;4)-beta-GlcNAc}-L-asparaginyl-[protein] + H2O = alpha-D-glucosyl-(1-&gt;3)-D-mannopyranose + N(4)-{alpha-D-Man-(1-&gt;2)-alpha-D-Man-(1-&gt;3)-[alpha-D-Man-(1-&gt;2)-alpha-D-Man-(1-&gt;3)-[alpha-D-Man-(1-&gt;2)-alpha-D-Man-(1-&gt;6)]-alpha-D-Man-(1-&gt;6)]-beta-D-Man-(1-&gt;4)-beta-D-GlaNAc-(1-&gt;4)-beta-D-GlcNAc}-L-asparaginyl-[protein] (N-glucan mannose isomer 8A1,2,3B1,2)</text>
        <dbReference type="Rhea" id="RHEA:54824"/>
        <dbReference type="Rhea" id="RHEA-COMP:14010"/>
        <dbReference type="Rhea" id="RHEA-COMP:14011"/>
        <dbReference type="ChEBI" id="CHEBI:15377"/>
        <dbReference type="ChEBI" id="CHEBI:52996"/>
        <dbReference type="ChEBI" id="CHEBI:59080"/>
        <dbReference type="ChEBI" id="CHEBI:60627"/>
        <dbReference type="EC" id="3.2.1.130"/>
    </reaction>
</comment>
<comment type="biophysicochemical properties">
    <phDependence>
        <text evidence="2">Optimum pH is 6.2.</text>
    </phDependence>
    <temperatureDependence>
        <text evidence="2">Optimum temperature is 37 degrees Celsius.</text>
    </temperatureDependence>
</comment>
<comment type="subcellular location">
    <subcellularLocation>
        <location evidence="2 3">Golgi apparatus membrane</location>
        <topology evidence="2 3">Single-pass type II membrane protein</topology>
    </subcellularLocation>
</comment>
<comment type="tissue specificity">
    <text evidence="2">Highly expressed in the liver and kidney. Expressed at lower levels in muscle, pancreas, heart, placenta, lung and brain.</text>
</comment>
<comment type="PTM">
    <text>Undergoes proteolytic cleavage in the C-terminal region.</text>
</comment>
<comment type="similarity">
    <text evidence="5">Belongs to the glycosyl hydrolase 99 family.</text>
</comment>
<comment type="sequence caution" evidence="5">
    <conflict type="frameshift">
        <sequence resource="EMBL-CDS" id="AAL07306"/>
    </conflict>
</comment>
<comment type="sequence caution" evidence="5">
    <conflict type="erroneous initiation">
        <sequence resource="EMBL-CDS" id="CAD97640"/>
    </conflict>
</comment>
<gene>
    <name type="primary">MANEA</name>
</gene>
<dbReference type="EC" id="3.2.1.130" evidence="2 3"/>
<dbReference type="EMBL" id="AJ577574">
    <property type="protein sequence ID" value="CAE12165.1"/>
    <property type="molecule type" value="mRNA"/>
</dbReference>
<dbReference type="EMBL" id="AY372528">
    <property type="protein sequence ID" value="AAQ75077.1"/>
    <property type="molecule type" value="mRNA"/>
</dbReference>
<dbReference type="EMBL" id="AK022900">
    <property type="protein sequence ID" value="BAB14298.1"/>
    <property type="molecule type" value="mRNA"/>
</dbReference>
<dbReference type="EMBL" id="AK291940">
    <property type="protein sequence ID" value="BAF84629.1"/>
    <property type="molecule type" value="mRNA"/>
</dbReference>
<dbReference type="EMBL" id="BX537398">
    <property type="protein sequence ID" value="CAD97640.1"/>
    <property type="status" value="ALT_INIT"/>
    <property type="molecule type" value="mRNA"/>
</dbReference>
<dbReference type="EMBL" id="BX640869">
    <property type="protein sequence ID" value="CAE45927.1"/>
    <property type="molecule type" value="mRNA"/>
</dbReference>
<dbReference type="EMBL" id="AL671884">
    <property type="status" value="NOT_ANNOTATED_CDS"/>
    <property type="molecule type" value="Genomic_DNA"/>
</dbReference>
<dbReference type="EMBL" id="BC137014">
    <property type="protein sequence ID" value="AAI37015.1"/>
    <property type="molecule type" value="mRNA"/>
</dbReference>
<dbReference type="EMBL" id="BC137016">
    <property type="protein sequence ID" value="AAI37017.1"/>
    <property type="molecule type" value="mRNA"/>
</dbReference>
<dbReference type="EMBL" id="BC146671">
    <property type="protein sequence ID" value="AAI46672.1"/>
    <property type="molecule type" value="mRNA"/>
</dbReference>
<dbReference type="EMBL" id="BC150199">
    <property type="protein sequence ID" value="AAI50200.1"/>
    <property type="molecule type" value="mRNA"/>
</dbReference>
<dbReference type="EMBL" id="AY048774">
    <property type="protein sequence ID" value="AAL07306.1"/>
    <property type="status" value="ALT_FRAME"/>
    <property type="molecule type" value="mRNA"/>
</dbReference>
<dbReference type="CCDS" id="CCDS5032.1"/>
<dbReference type="RefSeq" id="NP_078917.2">
    <property type="nucleotide sequence ID" value="NM_024641.3"/>
</dbReference>
<dbReference type="RefSeq" id="XP_005267204.1">
    <property type="nucleotide sequence ID" value="XM_005267147.4"/>
</dbReference>
<dbReference type="RefSeq" id="XP_054212417.1">
    <property type="nucleotide sequence ID" value="XM_054356442.1"/>
</dbReference>
<dbReference type="PDB" id="6ZDC">
    <property type="method" value="X-ray"/>
    <property type="resolution" value="2.25 A"/>
    <property type="chains" value="A=98-462"/>
</dbReference>
<dbReference type="PDB" id="6ZDF">
    <property type="method" value="X-ray"/>
    <property type="resolution" value="3.00 A"/>
    <property type="chains" value="A/B/C=98-462"/>
</dbReference>
<dbReference type="PDB" id="6ZDK">
    <property type="method" value="X-ray"/>
    <property type="resolution" value="2.00 A"/>
    <property type="chains" value="AAA=98-462"/>
</dbReference>
<dbReference type="PDB" id="6ZDL">
    <property type="method" value="X-ray"/>
    <property type="resolution" value="1.90 A"/>
    <property type="chains" value="AAA=98-462"/>
</dbReference>
<dbReference type="PDB" id="6ZFA">
    <property type="method" value="X-ray"/>
    <property type="resolution" value="1.80 A"/>
    <property type="chains" value="AAA=98-462"/>
</dbReference>
<dbReference type="PDB" id="6ZFN">
    <property type="method" value="X-ray"/>
    <property type="resolution" value="1.10 A"/>
    <property type="chains" value="AAA=98-462"/>
</dbReference>
<dbReference type="PDB" id="6ZFQ">
    <property type="method" value="X-ray"/>
    <property type="resolution" value="1.20 A"/>
    <property type="chains" value="AAA=98-462"/>
</dbReference>
<dbReference type="PDB" id="6ZJ1">
    <property type="method" value="X-ray"/>
    <property type="resolution" value="1.96 A"/>
    <property type="chains" value="AAA=98-462"/>
</dbReference>
<dbReference type="PDB" id="6ZJ5">
    <property type="method" value="X-ray"/>
    <property type="resolution" value="2.27 A"/>
    <property type="chains" value="AAA=98-462"/>
</dbReference>
<dbReference type="PDBsum" id="6ZDC"/>
<dbReference type="PDBsum" id="6ZDF"/>
<dbReference type="PDBsum" id="6ZDK"/>
<dbReference type="PDBsum" id="6ZDL"/>
<dbReference type="PDBsum" id="6ZFA"/>
<dbReference type="PDBsum" id="6ZFN"/>
<dbReference type="PDBsum" id="6ZFQ"/>
<dbReference type="PDBsum" id="6ZJ1"/>
<dbReference type="PDBsum" id="6ZJ5"/>
<dbReference type="SMR" id="Q5SRI9"/>
<dbReference type="BioGRID" id="122815">
    <property type="interactions" value="59"/>
</dbReference>
<dbReference type="FunCoup" id="Q5SRI9">
    <property type="interactions" value="1178"/>
</dbReference>
<dbReference type="IntAct" id="Q5SRI9">
    <property type="interactions" value="45"/>
</dbReference>
<dbReference type="STRING" id="9606.ENSP00000351669"/>
<dbReference type="CAZy" id="GH99">
    <property type="family name" value="Glycoside Hydrolase Family 99"/>
</dbReference>
<dbReference type="GlyGen" id="Q5SRI9">
    <property type="glycosylation" value="5 sites, 1 O-linked glycan (5 sites)"/>
</dbReference>
<dbReference type="iPTMnet" id="Q5SRI9"/>
<dbReference type="PhosphoSitePlus" id="Q5SRI9"/>
<dbReference type="SwissPalm" id="Q5SRI9"/>
<dbReference type="BioMuta" id="MANEA"/>
<dbReference type="DMDM" id="74743637"/>
<dbReference type="jPOST" id="Q5SRI9"/>
<dbReference type="MassIVE" id="Q5SRI9"/>
<dbReference type="PaxDb" id="9606-ENSP00000351669"/>
<dbReference type="PeptideAtlas" id="Q5SRI9"/>
<dbReference type="ProteomicsDB" id="63853"/>
<dbReference type="Pumba" id="Q5SRI9"/>
<dbReference type="Antibodypedia" id="2637">
    <property type="antibodies" value="55 antibodies from 19 providers"/>
</dbReference>
<dbReference type="DNASU" id="79694"/>
<dbReference type="Ensembl" id="ENST00000358812.9">
    <property type="protein sequence ID" value="ENSP00000351669.4"/>
    <property type="gene ID" value="ENSG00000172469.17"/>
</dbReference>
<dbReference type="Ensembl" id="ENST00000682663.1">
    <property type="protein sequence ID" value="ENSP00000507267.1"/>
    <property type="gene ID" value="ENSG00000172469.17"/>
</dbReference>
<dbReference type="Ensembl" id="ENST00000684753.1">
    <property type="protein sequence ID" value="ENSP00000506887.1"/>
    <property type="gene ID" value="ENSG00000172469.17"/>
</dbReference>
<dbReference type="GeneID" id="79694"/>
<dbReference type="KEGG" id="hsa:79694"/>
<dbReference type="MANE-Select" id="ENST00000358812.9">
    <property type="protein sequence ID" value="ENSP00000351669.4"/>
    <property type="RefSeq nucleotide sequence ID" value="NM_024641.4"/>
    <property type="RefSeq protein sequence ID" value="NP_078917.2"/>
</dbReference>
<dbReference type="UCSC" id="uc003poo.3">
    <property type="organism name" value="human"/>
</dbReference>
<dbReference type="AGR" id="HGNC:21072"/>
<dbReference type="CTD" id="79694"/>
<dbReference type="DisGeNET" id="79694"/>
<dbReference type="GeneCards" id="MANEA"/>
<dbReference type="HGNC" id="HGNC:21072">
    <property type="gene designation" value="MANEA"/>
</dbReference>
<dbReference type="HPA" id="ENSG00000172469">
    <property type="expression patterns" value="Low tissue specificity"/>
</dbReference>
<dbReference type="MIM" id="612327">
    <property type="type" value="gene"/>
</dbReference>
<dbReference type="neXtProt" id="NX_Q5SRI9"/>
<dbReference type="OpenTargets" id="ENSG00000172469"/>
<dbReference type="PharmGKB" id="PA134891001"/>
<dbReference type="VEuPathDB" id="HostDB:ENSG00000172469"/>
<dbReference type="eggNOG" id="ENOG502QPJV">
    <property type="taxonomic scope" value="Eukaryota"/>
</dbReference>
<dbReference type="GeneTree" id="ENSGT00390000016054"/>
<dbReference type="HOGENOM" id="CLU_042710_1_1_1"/>
<dbReference type="InParanoid" id="Q5SRI9"/>
<dbReference type="OMA" id="GFLDYNP"/>
<dbReference type="OrthoDB" id="406152at2759"/>
<dbReference type="PAN-GO" id="Q5SRI9">
    <property type="GO annotations" value="2 GO annotations based on evolutionary models"/>
</dbReference>
<dbReference type="PhylomeDB" id="Q5SRI9"/>
<dbReference type="TreeFam" id="TF324051"/>
<dbReference type="BioCyc" id="MetaCyc:HS16090-MONOMER"/>
<dbReference type="BRENDA" id="3.2.1.130">
    <property type="organism ID" value="2681"/>
</dbReference>
<dbReference type="PathwayCommons" id="Q5SRI9"/>
<dbReference type="Reactome" id="R-HSA-964739">
    <property type="pathway name" value="N-glycan trimming and elongation in the cis-Golgi"/>
</dbReference>
<dbReference type="SignaLink" id="Q5SRI9"/>
<dbReference type="BioGRID-ORCS" id="79694">
    <property type="hits" value="17 hits in 1155 CRISPR screens"/>
</dbReference>
<dbReference type="GeneWiki" id="MANEA"/>
<dbReference type="GenomeRNAi" id="79694"/>
<dbReference type="Pharos" id="Q5SRI9">
    <property type="development level" value="Tbio"/>
</dbReference>
<dbReference type="PRO" id="PR:Q5SRI9"/>
<dbReference type="Proteomes" id="UP000005640">
    <property type="component" value="Chromosome 6"/>
</dbReference>
<dbReference type="RNAct" id="Q5SRI9">
    <property type="molecule type" value="protein"/>
</dbReference>
<dbReference type="Bgee" id="ENSG00000172469">
    <property type="expression patterns" value="Expressed in adrenal tissue and 176 other cell types or tissues"/>
</dbReference>
<dbReference type="ExpressionAtlas" id="Q5SRI9">
    <property type="expression patterns" value="baseline and differential"/>
</dbReference>
<dbReference type="GO" id="GO:0005794">
    <property type="term" value="C:Golgi apparatus"/>
    <property type="evidence" value="ECO:0000314"/>
    <property type="project" value="HPA"/>
</dbReference>
<dbReference type="GO" id="GO:0000139">
    <property type="term" value="C:Golgi membrane"/>
    <property type="evidence" value="ECO:0000314"/>
    <property type="project" value="FlyBase"/>
</dbReference>
<dbReference type="GO" id="GO:0004559">
    <property type="term" value="F:alpha-mannosidase activity"/>
    <property type="evidence" value="ECO:0000318"/>
    <property type="project" value="GO_Central"/>
</dbReference>
<dbReference type="GO" id="GO:0004569">
    <property type="term" value="F:glycoprotein endo-alpha-1,2-mannosidase activity"/>
    <property type="evidence" value="ECO:0000314"/>
    <property type="project" value="FlyBase"/>
</dbReference>
<dbReference type="CDD" id="cd11574">
    <property type="entry name" value="GH99"/>
    <property type="match status" value="1"/>
</dbReference>
<dbReference type="FunFam" id="3.20.20.80:FF:000019">
    <property type="entry name" value="glycoprotein endo-alpha-1,2-mannosidase"/>
    <property type="match status" value="1"/>
</dbReference>
<dbReference type="Gene3D" id="3.20.20.80">
    <property type="entry name" value="Glycosidases"/>
    <property type="match status" value="1"/>
</dbReference>
<dbReference type="InterPro" id="IPR026071">
    <property type="entry name" value="Glyco_Hydrolase_99"/>
</dbReference>
<dbReference type="InterPro" id="IPR017853">
    <property type="entry name" value="Glycoside_hydrolase_SF"/>
</dbReference>
<dbReference type="PANTHER" id="PTHR13572">
    <property type="entry name" value="ENDO-ALPHA-1,2-MANNOSIDASE"/>
    <property type="match status" value="1"/>
</dbReference>
<dbReference type="PANTHER" id="PTHR13572:SF1">
    <property type="entry name" value="GLYCOPROTEIN ENDO-ALPHA-1,2-MANNOSIDASE"/>
    <property type="match status" value="1"/>
</dbReference>
<dbReference type="Pfam" id="PF16317">
    <property type="entry name" value="Glyco_hydro_99"/>
    <property type="match status" value="1"/>
</dbReference>
<dbReference type="SUPFAM" id="SSF51445">
    <property type="entry name" value="(Trans)glycosidases"/>
    <property type="match status" value="1"/>
</dbReference>
<reference key="1">
    <citation type="journal article" date="2005" name="Biochimie">
        <title>Human endo-alpha1,2-mannosidase is a Golgi-resident type II membrane protein.</title>
        <authorList>
            <person name="Hardt B."/>
            <person name="Voelker C."/>
            <person name="Mundt S."/>
            <person name="Salska-Navarro M."/>
            <person name="Hauptmann M."/>
            <person name="Bause E."/>
        </authorList>
    </citation>
    <scope>NUCLEOTIDE SEQUENCE [MRNA]</scope>
    <scope>SUBCELLULAR LOCATION</scope>
    <scope>TOPOLOGY</scope>
    <scope>CATALYTIC ACTIVITY</scope>
</reference>
<reference key="2">
    <citation type="journal article" date="2005" name="Glycobiology">
        <title>Intact alpha-1,2-endomannosidase is a typical type II membrane protein.</title>
        <authorList>
            <person name="Hamilton S.R."/>
            <person name="Li H."/>
            <person name="Wischnewski H."/>
            <person name="Prasad A."/>
            <person name="Kerley-Hamilton J.S."/>
            <person name="Mitchell T."/>
            <person name="Walling A.J."/>
            <person name="Davidson R.C."/>
            <person name="Wildt S."/>
            <person name="Gerngross T.U."/>
        </authorList>
    </citation>
    <scope>NUCLEOTIDE SEQUENCE [MRNA]</scope>
    <scope>CATALYTIC ACTIVITY</scope>
    <scope>BIOPHYSICOCHEMICAL PROPERTIES</scope>
    <scope>TISSUE SPECIFICITY</scope>
    <scope>PTM</scope>
    <scope>SUBCELLULAR LOCATION</scope>
    <scope>TOPOLOGY</scope>
    <source>
        <tissue>Liver</tissue>
    </source>
</reference>
<reference key="3">
    <citation type="journal article" date="2004" name="Nat. Genet.">
        <title>Complete sequencing and characterization of 21,243 full-length human cDNAs.</title>
        <authorList>
            <person name="Ota T."/>
            <person name="Suzuki Y."/>
            <person name="Nishikawa T."/>
            <person name="Otsuki T."/>
            <person name="Sugiyama T."/>
            <person name="Irie R."/>
            <person name="Wakamatsu A."/>
            <person name="Hayashi K."/>
            <person name="Sato H."/>
            <person name="Nagai K."/>
            <person name="Kimura K."/>
            <person name="Makita H."/>
            <person name="Sekine M."/>
            <person name="Obayashi M."/>
            <person name="Nishi T."/>
            <person name="Shibahara T."/>
            <person name="Tanaka T."/>
            <person name="Ishii S."/>
            <person name="Yamamoto J."/>
            <person name="Saito K."/>
            <person name="Kawai Y."/>
            <person name="Isono Y."/>
            <person name="Nakamura Y."/>
            <person name="Nagahari K."/>
            <person name="Murakami K."/>
            <person name="Yasuda T."/>
            <person name="Iwayanagi T."/>
            <person name="Wagatsuma M."/>
            <person name="Shiratori A."/>
            <person name="Sudo H."/>
            <person name="Hosoiri T."/>
            <person name="Kaku Y."/>
            <person name="Kodaira H."/>
            <person name="Kondo H."/>
            <person name="Sugawara M."/>
            <person name="Takahashi M."/>
            <person name="Kanda K."/>
            <person name="Yokoi T."/>
            <person name="Furuya T."/>
            <person name="Kikkawa E."/>
            <person name="Omura Y."/>
            <person name="Abe K."/>
            <person name="Kamihara K."/>
            <person name="Katsuta N."/>
            <person name="Sato K."/>
            <person name="Tanikawa M."/>
            <person name="Yamazaki M."/>
            <person name="Ninomiya K."/>
            <person name="Ishibashi T."/>
            <person name="Yamashita H."/>
            <person name="Murakawa K."/>
            <person name="Fujimori K."/>
            <person name="Tanai H."/>
            <person name="Kimata M."/>
            <person name="Watanabe M."/>
            <person name="Hiraoka S."/>
            <person name="Chiba Y."/>
            <person name="Ishida S."/>
            <person name="Ono Y."/>
            <person name="Takiguchi S."/>
            <person name="Watanabe S."/>
            <person name="Yosida M."/>
            <person name="Hotuta T."/>
            <person name="Kusano J."/>
            <person name="Kanehori K."/>
            <person name="Takahashi-Fujii A."/>
            <person name="Hara H."/>
            <person name="Tanase T.-O."/>
            <person name="Nomura Y."/>
            <person name="Togiya S."/>
            <person name="Komai F."/>
            <person name="Hara R."/>
            <person name="Takeuchi K."/>
            <person name="Arita M."/>
            <person name="Imose N."/>
            <person name="Musashino K."/>
            <person name="Yuuki H."/>
            <person name="Oshima A."/>
            <person name="Sasaki N."/>
            <person name="Aotsuka S."/>
            <person name="Yoshikawa Y."/>
            <person name="Matsunawa H."/>
            <person name="Ichihara T."/>
            <person name="Shiohata N."/>
            <person name="Sano S."/>
            <person name="Moriya S."/>
            <person name="Momiyama H."/>
            <person name="Satoh N."/>
            <person name="Takami S."/>
            <person name="Terashima Y."/>
            <person name="Suzuki O."/>
            <person name="Nakagawa S."/>
            <person name="Senoh A."/>
            <person name="Mizoguchi H."/>
            <person name="Goto Y."/>
            <person name="Shimizu F."/>
            <person name="Wakebe H."/>
            <person name="Hishigaki H."/>
            <person name="Watanabe T."/>
            <person name="Sugiyama A."/>
            <person name="Takemoto M."/>
            <person name="Kawakami B."/>
            <person name="Yamazaki M."/>
            <person name="Watanabe K."/>
            <person name="Kumagai A."/>
            <person name="Itakura S."/>
            <person name="Fukuzumi Y."/>
            <person name="Fujimori Y."/>
            <person name="Komiyama M."/>
            <person name="Tashiro H."/>
            <person name="Tanigami A."/>
            <person name="Fujiwara T."/>
            <person name="Ono T."/>
            <person name="Yamada K."/>
            <person name="Fujii Y."/>
            <person name="Ozaki K."/>
            <person name="Hirao M."/>
            <person name="Ohmori Y."/>
            <person name="Kawabata A."/>
            <person name="Hikiji T."/>
            <person name="Kobatake N."/>
            <person name="Inagaki H."/>
            <person name="Ikema Y."/>
            <person name="Okamoto S."/>
            <person name="Okitani R."/>
            <person name="Kawakami T."/>
            <person name="Noguchi S."/>
            <person name="Itoh T."/>
            <person name="Shigeta K."/>
            <person name="Senba T."/>
            <person name="Matsumura K."/>
            <person name="Nakajima Y."/>
            <person name="Mizuno T."/>
            <person name="Morinaga M."/>
            <person name="Sasaki M."/>
            <person name="Togashi T."/>
            <person name="Oyama M."/>
            <person name="Hata H."/>
            <person name="Watanabe M."/>
            <person name="Komatsu T."/>
            <person name="Mizushima-Sugano J."/>
            <person name="Satoh T."/>
            <person name="Shirai Y."/>
            <person name="Takahashi Y."/>
            <person name="Nakagawa K."/>
            <person name="Okumura K."/>
            <person name="Nagase T."/>
            <person name="Nomura N."/>
            <person name="Kikuchi H."/>
            <person name="Masuho Y."/>
            <person name="Yamashita R."/>
            <person name="Nakai K."/>
            <person name="Yada T."/>
            <person name="Nakamura Y."/>
            <person name="Ohara O."/>
            <person name="Isogai T."/>
            <person name="Sugano S."/>
        </authorList>
    </citation>
    <scope>NUCLEOTIDE SEQUENCE [LARGE SCALE MRNA]</scope>
</reference>
<reference key="4">
    <citation type="journal article" date="2007" name="BMC Genomics">
        <title>The full-ORF clone resource of the German cDNA consortium.</title>
        <authorList>
            <person name="Bechtel S."/>
            <person name="Rosenfelder H."/>
            <person name="Duda A."/>
            <person name="Schmidt C.P."/>
            <person name="Ernst U."/>
            <person name="Wellenreuther R."/>
            <person name="Mehrle A."/>
            <person name="Schuster C."/>
            <person name="Bahr A."/>
            <person name="Bloecker H."/>
            <person name="Heubner D."/>
            <person name="Hoerlein A."/>
            <person name="Michel G."/>
            <person name="Wedler H."/>
            <person name="Koehrer K."/>
            <person name="Ottenwaelder B."/>
            <person name="Poustka A."/>
            <person name="Wiemann S."/>
            <person name="Schupp I."/>
        </authorList>
    </citation>
    <scope>NUCLEOTIDE SEQUENCE [LARGE SCALE MRNA]</scope>
    <source>
        <tissue>Fetal kidney</tissue>
    </source>
</reference>
<reference key="5">
    <citation type="journal article" date="2003" name="Nature">
        <title>The DNA sequence and analysis of human chromosome 6.</title>
        <authorList>
            <person name="Mungall A.J."/>
            <person name="Palmer S.A."/>
            <person name="Sims S.K."/>
            <person name="Edwards C.A."/>
            <person name="Ashurst J.L."/>
            <person name="Wilming L."/>
            <person name="Jones M.C."/>
            <person name="Horton R."/>
            <person name="Hunt S.E."/>
            <person name="Scott C.E."/>
            <person name="Gilbert J.G.R."/>
            <person name="Clamp M.E."/>
            <person name="Bethel G."/>
            <person name="Milne S."/>
            <person name="Ainscough R."/>
            <person name="Almeida J.P."/>
            <person name="Ambrose K.D."/>
            <person name="Andrews T.D."/>
            <person name="Ashwell R.I.S."/>
            <person name="Babbage A.K."/>
            <person name="Bagguley C.L."/>
            <person name="Bailey J."/>
            <person name="Banerjee R."/>
            <person name="Barker D.J."/>
            <person name="Barlow K.F."/>
            <person name="Bates K."/>
            <person name="Beare D.M."/>
            <person name="Beasley H."/>
            <person name="Beasley O."/>
            <person name="Bird C.P."/>
            <person name="Blakey S.E."/>
            <person name="Bray-Allen S."/>
            <person name="Brook J."/>
            <person name="Brown A.J."/>
            <person name="Brown J.Y."/>
            <person name="Burford D.C."/>
            <person name="Burrill W."/>
            <person name="Burton J."/>
            <person name="Carder C."/>
            <person name="Carter N.P."/>
            <person name="Chapman J.C."/>
            <person name="Clark S.Y."/>
            <person name="Clark G."/>
            <person name="Clee C.M."/>
            <person name="Clegg S."/>
            <person name="Cobley V."/>
            <person name="Collier R.E."/>
            <person name="Collins J.E."/>
            <person name="Colman L.K."/>
            <person name="Corby N.R."/>
            <person name="Coville G.J."/>
            <person name="Culley K.M."/>
            <person name="Dhami P."/>
            <person name="Davies J."/>
            <person name="Dunn M."/>
            <person name="Earthrowl M.E."/>
            <person name="Ellington A.E."/>
            <person name="Evans K.A."/>
            <person name="Faulkner L."/>
            <person name="Francis M.D."/>
            <person name="Frankish A."/>
            <person name="Frankland J."/>
            <person name="French L."/>
            <person name="Garner P."/>
            <person name="Garnett J."/>
            <person name="Ghori M.J."/>
            <person name="Gilby L.M."/>
            <person name="Gillson C.J."/>
            <person name="Glithero R.J."/>
            <person name="Grafham D.V."/>
            <person name="Grant M."/>
            <person name="Gribble S."/>
            <person name="Griffiths C."/>
            <person name="Griffiths M.N.D."/>
            <person name="Hall R."/>
            <person name="Halls K.S."/>
            <person name="Hammond S."/>
            <person name="Harley J.L."/>
            <person name="Hart E.A."/>
            <person name="Heath P.D."/>
            <person name="Heathcott R."/>
            <person name="Holmes S.J."/>
            <person name="Howden P.J."/>
            <person name="Howe K.L."/>
            <person name="Howell G.R."/>
            <person name="Huckle E."/>
            <person name="Humphray S.J."/>
            <person name="Humphries M.D."/>
            <person name="Hunt A.R."/>
            <person name="Johnson C.M."/>
            <person name="Joy A.A."/>
            <person name="Kay M."/>
            <person name="Keenan S.J."/>
            <person name="Kimberley A.M."/>
            <person name="King A."/>
            <person name="Laird G.K."/>
            <person name="Langford C."/>
            <person name="Lawlor S."/>
            <person name="Leongamornlert D.A."/>
            <person name="Leversha M."/>
            <person name="Lloyd C.R."/>
            <person name="Lloyd D.M."/>
            <person name="Loveland J.E."/>
            <person name="Lovell J."/>
            <person name="Martin S."/>
            <person name="Mashreghi-Mohammadi M."/>
            <person name="Maslen G.L."/>
            <person name="Matthews L."/>
            <person name="McCann O.T."/>
            <person name="McLaren S.J."/>
            <person name="McLay K."/>
            <person name="McMurray A."/>
            <person name="Moore M.J.F."/>
            <person name="Mullikin J.C."/>
            <person name="Niblett D."/>
            <person name="Nickerson T."/>
            <person name="Novik K.L."/>
            <person name="Oliver K."/>
            <person name="Overton-Larty E.K."/>
            <person name="Parker A."/>
            <person name="Patel R."/>
            <person name="Pearce A.V."/>
            <person name="Peck A.I."/>
            <person name="Phillimore B.J.C.T."/>
            <person name="Phillips S."/>
            <person name="Plumb R.W."/>
            <person name="Porter K.M."/>
            <person name="Ramsey Y."/>
            <person name="Ranby S.A."/>
            <person name="Rice C.M."/>
            <person name="Ross M.T."/>
            <person name="Searle S.M."/>
            <person name="Sehra H.K."/>
            <person name="Sheridan E."/>
            <person name="Skuce C.D."/>
            <person name="Smith S."/>
            <person name="Smith M."/>
            <person name="Spraggon L."/>
            <person name="Squares S.L."/>
            <person name="Steward C.A."/>
            <person name="Sycamore N."/>
            <person name="Tamlyn-Hall G."/>
            <person name="Tester J."/>
            <person name="Theaker A.J."/>
            <person name="Thomas D.W."/>
            <person name="Thorpe A."/>
            <person name="Tracey A."/>
            <person name="Tromans A."/>
            <person name="Tubby B."/>
            <person name="Wall M."/>
            <person name="Wallis J.M."/>
            <person name="West A.P."/>
            <person name="White S.S."/>
            <person name="Whitehead S.L."/>
            <person name="Whittaker H."/>
            <person name="Wild A."/>
            <person name="Willey D.J."/>
            <person name="Wilmer T.E."/>
            <person name="Wood J.M."/>
            <person name="Wray P.W."/>
            <person name="Wyatt J.C."/>
            <person name="Young L."/>
            <person name="Younger R.M."/>
            <person name="Bentley D.R."/>
            <person name="Coulson A."/>
            <person name="Durbin R.M."/>
            <person name="Hubbard T."/>
            <person name="Sulston J.E."/>
            <person name="Dunham I."/>
            <person name="Rogers J."/>
            <person name="Beck S."/>
        </authorList>
    </citation>
    <scope>NUCLEOTIDE SEQUENCE [LARGE SCALE GENOMIC DNA]</scope>
</reference>
<reference key="6">
    <citation type="journal article" date="2004" name="Genome Res.">
        <title>The status, quality, and expansion of the NIH full-length cDNA project: the Mammalian Gene Collection (MGC).</title>
        <authorList>
            <consortium name="The MGC Project Team"/>
        </authorList>
    </citation>
    <scope>NUCLEOTIDE SEQUENCE [LARGE SCALE MRNA]</scope>
</reference>
<reference key="7">
    <citation type="submission" date="2001-07" db="EMBL/GenBank/DDBJ databases">
        <title>Novel gene expressed in human liver.</title>
        <authorList>
            <person name="Zeng L."/>
            <person name="Liu F."/>
            <person name="Xu X."/>
            <person name="Zhang X."/>
            <person name="Chen Z."/>
            <person name="Han Z."/>
        </authorList>
    </citation>
    <scope>NUCLEOTIDE SEQUENCE [LARGE SCALE MRNA] OF 1-214</scope>
    <source>
        <tissue>Liver</tissue>
    </source>
</reference>
<reference key="8">
    <citation type="journal article" date="2006" name="Science">
        <title>The consensus coding sequences of human breast and colorectal cancers.</title>
        <authorList>
            <person name="Sjoeblom T."/>
            <person name="Jones S."/>
            <person name="Wood L.D."/>
            <person name="Parsons D.W."/>
            <person name="Lin J."/>
            <person name="Barber T.D."/>
            <person name="Mandelker D."/>
            <person name="Leary R.J."/>
            <person name="Ptak J."/>
            <person name="Silliman N."/>
            <person name="Szabo S."/>
            <person name="Buckhaults P."/>
            <person name="Farrell C."/>
            <person name="Meeh P."/>
            <person name="Markowitz S.D."/>
            <person name="Willis J."/>
            <person name="Dawson D."/>
            <person name="Willson J.K.V."/>
            <person name="Gazdar A.F."/>
            <person name="Hartigan J."/>
            <person name="Wu L."/>
            <person name="Liu C."/>
            <person name="Parmigiani G."/>
            <person name="Park B.H."/>
            <person name="Bachman K.E."/>
            <person name="Papadopoulos N."/>
            <person name="Vogelstein B."/>
            <person name="Kinzler K.W."/>
            <person name="Velculescu V.E."/>
        </authorList>
    </citation>
    <scope>VARIANT [LARGE SCALE ANALYSIS] CYS-331</scope>
</reference>
<keyword id="KW-0002">3D-structure</keyword>
<keyword id="KW-0333">Golgi apparatus</keyword>
<keyword id="KW-0378">Hydrolase</keyword>
<keyword id="KW-0472">Membrane</keyword>
<keyword id="KW-1267">Proteomics identification</keyword>
<keyword id="KW-1185">Reference proteome</keyword>
<keyword id="KW-0735">Signal-anchor</keyword>
<keyword id="KW-0812">Transmembrane</keyword>
<keyword id="KW-1133">Transmembrane helix</keyword>